<gene>
    <name evidence="10" type="primary">DNAAF8</name>
    <name type="synonym">C16orf71</name>
    <name evidence="8" type="synonym">DAAP1</name>
</gene>
<reference key="1">
    <citation type="submission" date="2001-10" db="EMBL/GenBank/DDBJ databases">
        <authorList>
            <person name="Guo J.H."/>
            <person name="Yu L."/>
        </authorList>
    </citation>
    <scope>NUCLEOTIDE SEQUENCE [LARGE SCALE MRNA]</scope>
    <scope>VARIANTS CYS-302 AND ARG-354</scope>
    <source>
        <tissue>Testis</tissue>
    </source>
</reference>
<reference key="2">
    <citation type="journal article" date="2004" name="Nature">
        <title>The sequence and analysis of duplication-rich human chromosome 16.</title>
        <authorList>
            <person name="Martin J."/>
            <person name="Han C."/>
            <person name="Gordon L.A."/>
            <person name="Terry A."/>
            <person name="Prabhakar S."/>
            <person name="She X."/>
            <person name="Xie G."/>
            <person name="Hellsten U."/>
            <person name="Chan Y.M."/>
            <person name="Altherr M."/>
            <person name="Couronne O."/>
            <person name="Aerts A."/>
            <person name="Bajorek E."/>
            <person name="Black S."/>
            <person name="Blumer H."/>
            <person name="Branscomb E."/>
            <person name="Brown N.C."/>
            <person name="Bruno W.J."/>
            <person name="Buckingham J.M."/>
            <person name="Callen D.F."/>
            <person name="Campbell C.S."/>
            <person name="Campbell M.L."/>
            <person name="Campbell E.W."/>
            <person name="Caoile C."/>
            <person name="Challacombe J.F."/>
            <person name="Chasteen L.A."/>
            <person name="Chertkov O."/>
            <person name="Chi H.C."/>
            <person name="Christensen M."/>
            <person name="Clark L.M."/>
            <person name="Cohn J.D."/>
            <person name="Denys M."/>
            <person name="Detter J.C."/>
            <person name="Dickson M."/>
            <person name="Dimitrijevic-Bussod M."/>
            <person name="Escobar J."/>
            <person name="Fawcett J.J."/>
            <person name="Flowers D."/>
            <person name="Fotopulos D."/>
            <person name="Glavina T."/>
            <person name="Gomez M."/>
            <person name="Gonzales E."/>
            <person name="Goodstein D."/>
            <person name="Goodwin L.A."/>
            <person name="Grady D.L."/>
            <person name="Grigoriev I."/>
            <person name="Groza M."/>
            <person name="Hammon N."/>
            <person name="Hawkins T."/>
            <person name="Haydu L."/>
            <person name="Hildebrand C.E."/>
            <person name="Huang W."/>
            <person name="Israni S."/>
            <person name="Jett J."/>
            <person name="Jewett P.B."/>
            <person name="Kadner K."/>
            <person name="Kimball H."/>
            <person name="Kobayashi A."/>
            <person name="Krawczyk M.-C."/>
            <person name="Leyba T."/>
            <person name="Longmire J.L."/>
            <person name="Lopez F."/>
            <person name="Lou Y."/>
            <person name="Lowry S."/>
            <person name="Ludeman T."/>
            <person name="Manohar C.F."/>
            <person name="Mark G.A."/>
            <person name="McMurray K.L."/>
            <person name="Meincke L.J."/>
            <person name="Morgan J."/>
            <person name="Moyzis R.K."/>
            <person name="Mundt M.O."/>
            <person name="Munk A.C."/>
            <person name="Nandkeshwar R.D."/>
            <person name="Pitluck S."/>
            <person name="Pollard M."/>
            <person name="Predki P."/>
            <person name="Parson-Quintana B."/>
            <person name="Ramirez L."/>
            <person name="Rash S."/>
            <person name="Retterer J."/>
            <person name="Ricke D.O."/>
            <person name="Robinson D.L."/>
            <person name="Rodriguez A."/>
            <person name="Salamov A."/>
            <person name="Saunders E.H."/>
            <person name="Scott D."/>
            <person name="Shough T."/>
            <person name="Stallings R.L."/>
            <person name="Stalvey M."/>
            <person name="Sutherland R.D."/>
            <person name="Tapia R."/>
            <person name="Tesmer J.G."/>
            <person name="Thayer N."/>
            <person name="Thompson L.S."/>
            <person name="Tice H."/>
            <person name="Torney D.C."/>
            <person name="Tran-Gyamfi M."/>
            <person name="Tsai M."/>
            <person name="Ulanovsky L.E."/>
            <person name="Ustaszewska A."/>
            <person name="Vo N."/>
            <person name="White P.S."/>
            <person name="Williams A.L."/>
            <person name="Wills P.L."/>
            <person name="Wu J.-R."/>
            <person name="Wu K."/>
            <person name="Yang J."/>
            <person name="DeJong P."/>
            <person name="Bruce D."/>
            <person name="Doggett N.A."/>
            <person name="Deaven L."/>
            <person name="Schmutz J."/>
            <person name="Grimwood J."/>
            <person name="Richardson P."/>
            <person name="Rokhsar D.S."/>
            <person name="Eichler E.E."/>
            <person name="Gilna P."/>
            <person name="Lucas S.M."/>
            <person name="Myers R.M."/>
            <person name="Rubin E.M."/>
            <person name="Pennacchio L.A."/>
        </authorList>
    </citation>
    <scope>NUCLEOTIDE SEQUENCE [LARGE SCALE GENOMIC DNA]</scope>
</reference>
<reference key="3">
    <citation type="journal article" date="2004" name="Genome Res.">
        <title>The status, quality, and expansion of the NIH full-length cDNA project: the Mammalian Gene Collection (MGC).</title>
        <authorList>
            <consortium name="The MGC Project Team"/>
        </authorList>
    </citation>
    <scope>NUCLEOTIDE SEQUENCE [LARGE SCALE MRNA]</scope>
    <scope>VARIANTS CYS-302; ARG-354 AND LEU-465</scope>
    <source>
        <tissue>Testis</tissue>
    </source>
</reference>
<reference key="4">
    <citation type="journal article" date="2020" name="Elife">
        <title>Functional partitioning of a liquid-like organelle during assembly of axonemal dyneins.</title>
        <authorList>
            <person name="Lee C."/>
            <person name="Cox R.M."/>
            <person name="Papoulas O."/>
            <person name="Horani A."/>
            <person name="Drew K."/>
            <person name="Devitt C.C."/>
            <person name="Brody S.L."/>
            <person name="Marcotte E.M."/>
            <person name="Wallingford J.B."/>
        </authorList>
    </citation>
    <scope>SUBCELLULAR LOCATION</scope>
    <scope>TISSUE SPECIFICITY</scope>
</reference>
<reference key="5">
    <citation type="journal article" date="2019" name="J. Proteome Res.">
        <title>Cell Type-Specific Expression of Testis Elevated Genes Based on Transcriptomics and Antibody-Based Proteomics.</title>
        <authorList>
            <person name="Pineau C."/>
            <person name="Hikmet F."/>
            <person name="Zhang C."/>
            <person name="Oksvold P."/>
            <person name="Chen S."/>
            <person name="Fagerberg L."/>
            <person name="Uhlen M."/>
            <person name="Lindskog C."/>
        </authorList>
    </citation>
    <scope>SUBCELLULAR LOCATION</scope>
</reference>
<feature type="chain" id="PRO_0000294345" description="Dynein axonemal assembly factor 8">
    <location>
        <begin position="1"/>
        <end position="520"/>
    </location>
</feature>
<feature type="region of interest" description="Disordered" evidence="3">
    <location>
        <begin position="93"/>
        <end position="202"/>
    </location>
</feature>
<feature type="region of interest" description="Disordered" evidence="3">
    <location>
        <begin position="217"/>
        <end position="256"/>
    </location>
</feature>
<feature type="region of interest" description="Disordered" evidence="3">
    <location>
        <begin position="328"/>
        <end position="366"/>
    </location>
</feature>
<feature type="region of interest" description="Disordered" evidence="3">
    <location>
        <begin position="388"/>
        <end position="520"/>
    </location>
</feature>
<feature type="compositionally biased region" description="Basic and acidic residues" evidence="3">
    <location>
        <begin position="111"/>
        <end position="125"/>
    </location>
</feature>
<feature type="compositionally biased region" description="Acidic residues" evidence="3">
    <location>
        <begin position="401"/>
        <end position="410"/>
    </location>
</feature>
<feature type="compositionally biased region" description="Polar residues" evidence="3">
    <location>
        <begin position="420"/>
        <end position="437"/>
    </location>
</feature>
<feature type="modified residue" description="Phosphoserine" evidence="2">
    <location>
        <position position="161"/>
    </location>
</feature>
<feature type="modified residue" description="Phosphoserine" evidence="2">
    <location>
        <position position="351"/>
    </location>
</feature>
<feature type="sequence variant" id="VAR_033157" description="In dbSNP:rs17137215.">
    <original>E</original>
    <variation>D</variation>
    <location>
        <position position="88"/>
    </location>
</feature>
<feature type="sequence variant" id="VAR_033158" description="In dbSNP:rs17137230.">
    <original>P</original>
    <variation>S</variation>
    <location>
        <position position="143"/>
    </location>
</feature>
<feature type="sequence variant" id="VAR_033159" description="In dbSNP:rs35599524.">
    <original>S</original>
    <variation>L</variation>
    <location>
        <position position="190"/>
    </location>
</feature>
<feature type="sequence variant" id="VAR_033160" description="In dbSNP:rs35002791.">
    <original>E</original>
    <variation>K</variation>
    <location>
        <position position="232"/>
    </location>
</feature>
<feature type="sequence variant" id="VAR_033161" description="In dbSNP:rs7202010.">
    <original>A</original>
    <variation>V</variation>
    <location>
        <position position="241"/>
    </location>
</feature>
<feature type="sequence variant" id="VAR_033162" description="In dbSNP:rs2075469." evidence="4 7">
    <original>R</original>
    <variation>C</variation>
    <location>
        <position position="302"/>
    </location>
</feature>
<feature type="sequence variant" id="VAR_033163" description="In dbSNP:rs737700." evidence="4 7">
    <original>Q</original>
    <variation>R</variation>
    <location>
        <position position="354"/>
    </location>
</feature>
<feature type="sequence variant" id="VAR_061618" description="In dbSNP:rs17853375." evidence="4">
    <original>P</original>
    <variation>L</variation>
    <location>
        <position position="465"/>
    </location>
</feature>
<feature type="sequence conflict" description="In Ref. 3; AAH35024." evidence="9" ref="3">
    <original>Q</original>
    <variation>R</variation>
    <location>
        <position position="19"/>
    </location>
</feature>
<keyword id="KW-0963">Cytoplasm</keyword>
<keyword id="KW-0597">Phosphoprotein</keyword>
<keyword id="KW-1267">Proteomics identification</keyword>
<keyword id="KW-1185">Reference proteome</keyword>
<accession>Q8IYS4</accession>
<accession>Q8NCV0</accession>
<evidence type="ECO:0000250" key="1">
    <source>
        <dbReference type="UniProtKB" id="A0A1L8EYB2"/>
    </source>
</evidence>
<evidence type="ECO:0000250" key="2">
    <source>
        <dbReference type="UniProtKB" id="Q5XIK6"/>
    </source>
</evidence>
<evidence type="ECO:0000256" key="3">
    <source>
        <dbReference type="SAM" id="MobiDB-lite"/>
    </source>
</evidence>
<evidence type="ECO:0000269" key="4">
    <source>
    </source>
</evidence>
<evidence type="ECO:0000269" key="5">
    <source>
    </source>
</evidence>
<evidence type="ECO:0000269" key="6">
    <source>
    </source>
</evidence>
<evidence type="ECO:0000269" key="7">
    <source ref="1"/>
</evidence>
<evidence type="ECO:0000303" key="8">
    <source>
    </source>
</evidence>
<evidence type="ECO:0000305" key="9"/>
<evidence type="ECO:0000312" key="10">
    <source>
        <dbReference type="HGNC" id="HGNC:25081"/>
    </source>
</evidence>
<name>DAAF8_HUMAN</name>
<comment type="function">
    <text evidence="1">In cyliated cells, dynein axonemal particle-specific protein required for deployment of ODA to the axoneme. Interacts with outer dynein arm (ODA) subunits.</text>
</comment>
<comment type="subcellular location">
    <subcellularLocation>
        <location evidence="6">Dynein axonemal particle</location>
    </subcellularLocation>
    <subcellularLocation>
        <location evidence="5">Cytoplasm</location>
    </subcellularLocation>
</comment>
<comment type="tissue specificity">
    <text evidence="6">Expressed in respiratory ciliated cells (at protein level).</text>
</comment>
<organism>
    <name type="scientific">Homo sapiens</name>
    <name type="common">Human</name>
    <dbReference type="NCBI Taxonomy" id="9606"/>
    <lineage>
        <taxon>Eukaryota</taxon>
        <taxon>Metazoa</taxon>
        <taxon>Chordata</taxon>
        <taxon>Craniata</taxon>
        <taxon>Vertebrata</taxon>
        <taxon>Euteleostomi</taxon>
        <taxon>Mammalia</taxon>
        <taxon>Eutheria</taxon>
        <taxon>Euarchontoglires</taxon>
        <taxon>Primates</taxon>
        <taxon>Haplorrhini</taxon>
        <taxon>Catarrhini</taxon>
        <taxon>Hominidae</taxon>
        <taxon>Homo</taxon>
    </lineage>
</organism>
<proteinExistence type="evidence at protein level"/>
<sequence length="520" mass="55682">MASNDKGMAPSLGSPWASQMGPWDAILKAVKDQLPSLDSDSPLSDYGEEELFIFQRNQTSLIPDLSEELAEDPADGDKSRAWVAAAEESLPEPVLVPAELATEPGCRQNTRTKDASSQEGRDPGRPFESSGEVSALLGMAEEPPRWLEGDLGSLSFNTKGSQGPPWDPQAEATLSCHEGDPKAEPLSTASQESVNRRALRQERRKMIETDILQKVTRDACGPTSSDKGGVKEAPCHAAESAPRSKMPLVEPPEGPPVLSLQQLEAWDLDDILQSLAGQEDNQGNRAPGTVWWAADHRQVQDRMVPSAHNRLMEQLALLCTTQSKASACARKVPADTPQDTKEADSGSRCASRKQGSQAGPGPQLAQGMRLNAESPTIFIDLRQMELPDHLSPESSSHSSSDSEEEEEEEMAALGDAEGASPSSLGLRTCTGKSQLLQQLRAFQKGTAQPELPASKGPAGGRAQAPEDTAGSRTGRKQHMKLCAKGQSAQARLPRGRPRALGDVPEPGAAREALMPPLEQL</sequence>
<dbReference type="EMBL" id="AF447587">
    <property type="protein sequence ID" value="AAM22870.1"/>
    <property type="molecule type" value="mRNA"/>
</dbReference>
<dbReference type="EMBL" id="AC020663">
    <property type="status" value="NOT_ANNOTATED_CDS"/>
    <property type="molecule type" value="Genomic_DNA"/>
</dbReference>
<dbReference type="EMBL" id="BC035024">
    <property type="protein sequence ID" value="AAH35024.1"/>
    <property type="molecule type" value="mRNA"/>
</dbReference>
<dbReference type="CCDS" id="CCDS10521.1"/>
<dbReference type="RefSeq" id="NP_631909.2">
    <property type="nucleotide sequence ID" value="NM_139170.3"/>
</dbReference>
<dbReference type="RefSeq" id="XP_016878465.1">
    <property type="nucleotide sequence ID" value="XM_017022976.1"/>
</dbReference>
<dbReference type="SMR" id="Q8IYS4"/>
<dbReference type="BioGRID" id="126999">
    <property type="interactions" value="32"/>
</dbReference>
<dbReference type="FunCoup" id="Q8IYS4">
    <property type="interactions" value="43"/>
</dbReference>
<dbReference type="IntAct" id="Q8IYS4">
    <property type="interactions" value="31"/>
</dbReference>
<dbReference type="STRING" id="9606.ENSP00000299320"/>
<dbReference type="GlyGen" id="Q8IYS4">
    <property type="glycosylation" value="2 sites, 1 O-linked glycan (1 site)"/>
</dbReference>
<dbReference type="iPTMnet" id="Q8IYS4"/>
<dbReference type="PhosphoSitePlus" id="Q8IYS4"/>
<dbReference type="BioMuta" id="C16orf71"/>
<dbReference type="DMDM" id="296439389"/>
<dbReference type="jPOST" id="Q8IYS4"/>
<dbReference type="MassIVE" id="Q8IYS4"/>
<dbReference type="PaxDb" id="9606-ENSP00000299320"/>
<dbReference type="PeptideAtlas" id="Q8IYS4"/>
<dbReference type="ProteomicsDB" id="71223"/>
<dbReference type="Antibodypedia" id="24407">
    <property type="antibodies" value="53 antibodies from 17 providers"/>
</dbReference>
<dbReference type="DNASU" id="146562"/>
<dbReference type="Ensembl" id="ENST00000299320.10">
    <property type="protein sequence ID" value="ENSP00000299320.4"/>
    <property type="gene ID" value="ENSG00000166246.14"/>
</dbReference>
<dbReference type="GeneID" id="146562"/>
<dbReference type="KEGG" id="hsa:146562"/>
<dbReference type="MANE-Select" id="ENST00000299320.10">
    <property type="protein sequence ID" value="ENSP00000299320.4"/>
    <property type="RefSeq nucleotide sequence ID" value="NM_139170.3"/>
    <property type="RefSeq protein sequence ID" value="NP_631909.2"/>
</dbReference>
<dbReference type="UCSC" id="uc002cxn.4">
    <property type="organism name" value="human"/>
</dbReference>
<dbReference type="AGR" id="HGNC:25081"/>
<dbReference type="CTD" id="146562"/>
<dbReference type="DisGeNET" id="146562"/>
<dbReference type="GeneCards" id="DNAAF8"/>
<dbReference type="HGNC" id="HGNC:25081">
    <property type="gene designation" value="DNAAF8"/>
</dbReference>
<dbReference type="HPA" id="ENSG00000166246">
    <property type="expression patterns" value="Group enriched (fallopian tube, testis)"/>
</dbReference>
<dbReference type="neXtProt" id="NX_Q8IYS4"/>
<dbReference type="OpenTargets" id="ENSG00000166246"/>
<dbReference type="VEuPathDB" id="HostDB:ENSG00000166246"/>
<dbReference type="eggNOG" id="ENOG502SAQ4">
    <property type="taxonomic scope" value="Eukaryota"/>
</dbReference>
<dbReference type="GeneTree" id="ENSGT00390000015381"/>
<dbReference type="HOGENOM" id="CLU_037635_0_0_1"/>
<dbReference type="InParanoid" id="Q8IYS4"/>
<dbReference type="PAN-GO" id="Q8IYS4">
    <property type="GO annotations" value="1 GO annotation based on evolutionary models"/>
</dbReference>
<dbReference type="PhylomeDB" id="Q8IYS4"/>
<dbReference type="TreeFam" id="TF336688"/>
<dbReference type="PathwayCommons" id="Q8IYS4"/>
<dbReference type="SignaLink" id="Q8IYS4"/>
<dbReference type="BioGRID-ORCS" id="146562">
    <property type="hits" value="19 hits in 1116 CRISPR screens"/>
</dbReference>
<dbReference type="GenomeRNAi" id="146562"/>
<dbReference type="Pharos" id="Q8IYS4">
    <property type="development level" value="Tdark"/>
</dbReference>
<dbReference type="PRO" id="PR:Q8IYS4"/>
<dbReference type="Proteomes" id="UP000005640">
    <property type="component" value="Chromosome 16"/>
</dbReference>
<dbReference type="RNAct" id="Q8IYS4">
    <property type="molecule type" value="protein"/>
</dbReference>
<dbReference type="Bgee" id="ENSG00000166246">
    <property type="expression patterns" value="Expressed in left testis and 113 other cell types or tissues"/>
</dbReference>
<dbReference type="ExpressionAtlas" id="Q8IYS4">
    <property type="expression patterns" value="baseline and differential"/>
</dbReference>
<dbReference type="GO" id="GO:0005737">
    <property type="term" value="C:cytoplasm"/>
    <property type="evidence" value="ECO:0000314"/>
    <property type="project" value="UniProtKB"/>
</dbReference>
<dbReference type="GO" id="GO:0120293">
    <property type="term" value="C:dynein axonemal particle"/>
    <property type="evidence" value="ECO:0000314"/>
    <property type="project" value="UniProtKB"/>
</dbReference>
<dbReference type="GO" id="GO:0070840">
    <property type="term" value="F:dynein complex binding"/>
    <property type="evidence" value="ECO:0000250"/>
    <property type="project" value="UniProtKB"/>
</dbReference>
<dbReference type="GO" id="GO:0036158">
    <property type="term" value="P:outer dynein arm assembly"/>
    <property type="evidence" value="ECO:0000250"/>
    <property type="project" value="UniProtKB"/>
</dbReference>
<dbReference type="InterPro" id="IPR031531">
    <property type="entry name" value="DNAAF8"/>
</dbReference>
<dbReference type="PANTHER" id="PTHR35977">
    <property type="entry name" value="CHROMOSOME 16 OPEN READING FRAME 71"/>
    <property type="match status" value="1"/>
</dbReference>
<dbReference type="PANTHER" id="PTHR35977:SF1">
    <property type="entry name" value="DYNEIN AXONEMAL ASSEMBLY FACTOR 8"/>
    <property type="match status" value="1"/>
</dbReference>
<dbReference type="Pfam" id="PF15773">
    <property type="entry name" value="DAAP1"/>
    <property type="match status" value="1"/>
</dbReference>
<protein>
    <recommendedName>
        <fullName evidence="9">Dynein axonemal assembly factor 8</fullName>
    </recommendedName>
    <alternativeName>
        <fullName evidence="8">Dynein axonemal-associated protein 1</fullName>
    </alternativeName>
</protein>